<protein>
    <recommendedName>
        <fullName>F-box protein At2g23160</fullName>
    </recommendedName>
</protein>
<organism>
    <name type="scientific">Arabidopsis thaliana</name>
    <name type="common">Mouse-ear cress</name>
    <dbReference type="NCBI Taxonomy" id="3702"/>
    <lineage>
        <taxon>Eukaryota</taxon>
        <taxon>Viridiplantae</taxon>
        <taxon>Streptophyta</taxon>
        <taxon>Embryophyta</taxon>
        <taxon>Tracheophyta</taxon>
        <taxon>Spermatophyta</taxon>
        <taxon>Magnoliopsida</taxon>
        <taxon>eudicotyledons</taxon>
        <taxon>Gunneridae</taxon>
        <taxon>Pentapetalae</taxon>
        <taxon>rosids</taxon>
        <taxon>malvids</taxon>
        <taxon>Brassicales</taxon>
        <taxon>Brassicaceae</taxon>
        <taxon>Camelineae</taxon>
        <taxon>Arabidopsis</taxon>
    </lineage>
</organism>
<reference key="1">
    <citation type="journal article" date="1999" name="Nature">
        <title>Sequence and analysis of chromosome 2 of the plant Arabidopsis thaliana.</title>
        <authorList>
            <person name="Lin X."/>
            <person name="Kaul S."/>
            <person name="Rounsley S.D."/>
            <person name="Shea T.P."/>
            <person name="Benito M.-I."/>
            <person name="Town C.D."/>
            <person name="Fujii C.Y."/>
            <person name="Mason T.M."/>
            <person name="Bowman C.L."/>
            <person name="Barnstead M.E."/>
            <person name="Feldblyum T.V."/>
            <person name="Buell C.R."/>
            <person name="Ketchum K.A."/>
            <person name="Lee J.J."/>
            <person name="Ronning C.M."/>
            <person name="Koo H.L."/>
            <person name="Moffat K.S."/>
            <person name="Cronin L.A."/>
            <person name="Shen M."/>
            <person name="Pai G."/>
            <person name="Van Aken S."/>
            <person name="Umayam L."/>
            <person name="Tallon L.J."/>
            <person name="Gill J.E."/>
            <person name="Adams M.D."/>
            <person name="Carrera A.J."/>
            <person name="Creasy T.H."/>
            <person name="Goodman H.M."/>
            <person name="Somerville C.R."/>
            <person name="Copenhaver G.P."/>
            <person name="Preuss D."/>
            <person name="Nierman W.C."/>
            <person name="White O."/>
            <person name="Eisen J.A."/>
            <person name="Salzberg S.L."/>
            <person name="Fraser C.M."/>
            <person name="Venter J.C."/>
        </authorList>
    </citation>
    <scope>NUCLEOTIDE SEQUENCE [LARGE SCALE GENOMIC DNA]</scope>
    <source>
        <strain>cv. Columbia</strain>
    </source>
</reference>
<reference key="2">
    <citation type="journal article" date="2017" name="Plant J.">
        <title>Araport11: a complete reannotation of the Arabidopsis thaliana reference genome.</title>
        <authorList>
            <person name="Cheng C.Y."/>
            <person name="Krishnakumar V."/>
            <person name="Chan A.P."/>
            <person name="Thibaud-Nissen F."/>
            <person name="Schobel S."/>
            <person name="Town C.D."/>
        </authorList>
    </citation>
    <scope>GENOME REANNOTATION</scope>
    <source>
        <strain>cv. Columbia</strain>
    </source>
</reference>
<reference key="3">
    <citation type="journal article" date="2006" name="Plant Biotechnol. J.">
        <title>Simultaneous high-throughput recombinational cloning of open reading frames in closed and open configurations.</title>
        <authorList>
            <person name="Underwood B.A."/>
            <person name="Vanderhaeghen R."/>
            <person name="Whitford R."/>
            <person name="Town C.D."/>
            <person name="Hilson P."/>
        </authorList>
    </citation>
    <scope>NUCLEOTIDE SEQUENCE [LARGE SCALE MRNA]</scope>
    <source>
        <strain>cv. Columbia</strain>
    </source>
</reference>
<evidence type="ECO:0000305" key="1"/>
<proteinExistence type="evidence at transcript level"/>
<name>FB116_ARATH</name>
<gene>
    <name type="ordered locus">At2g23160</name>
    <name type="ORF">T20D16.21</name>
</gene>
<keyword id="KW-1185">Reference proteome</keyword>
<dbReference type="EMBL" id="AC002391">
    <property type="protein sequence ID" value="AAB87115.1"/>
    <property type="status" value="ALT_SEQ"/>
    <property type="molecule type" value="Genomic_DNA"/>
</dbReference>
<dbReference type="EMBL" id="CP002685">
    <property type="protein sequence ID" value="AEC07423.1"/>
    <property type="molecule type" value="Genomic_DNA"/>
</dbReference>
<dbReference type="EMBL" id="DQ459183">
    <property type="protein sequence ID" value="ABE97181.1"/>
    <property type="molecule type" value="mRNA"/>
</dbReference>
<dbReference type="PIR" id="T00516">
    <property type="entry name" value="T00516"/>
</dbReference>
<dbReference type="RefSeq" id="NP_179897.2">
    <property type="nucleotide sequence ID" value="NM_127880.2"/>
</dbReference>
<dbReference type="SMR" id="Q1KS79"/>
<dbReference type="FunCoup" id="Q1KS79">
    <property type="interactions" value="3"/>
</dbReference>
<dbReference type="PaxDb" id="3702-AT2G23160.1"/>
<dbReference type="EnsemblPlants" id="AT2G23160.1">
    <property type="protein sequence ID" value="AT2G23160.1"/>
    <property type="gene ID" value="AT2G23160"/>
</dbReference>
<dbReference type="GeneID" id="816848"/>
<dbReference type="Gramene" id="AT2G23160.1">
    <property type="protein sequence ID" value="AT2G23160.1"/>
    <property type="gene ID" value="AT2G23160"/>
</dbReference>
<dbReference type="KEGG" id="ath:AT2G23160"/>
<dbReference type="Araport" id="AT2G23160"/>
<dbReference type="TAIR" id="AT2G23160"/>
<dbReference type="HOGENOM" id="CLU_027176_8_3_1"/>
<dbReference type="InParanoid" id="Q1KS79"/>
<dbReference type="PhylomeDB" id="Q1KS79"/>
<dbReference type="PRO" id="PR:Q1KS79"/>
<dbReference type="Proteomes" id="UP000006548">
    <property type="component" value="Chromosome 2"/>
</dbReference>
<dbReference type="ExpressionAtlas" id="Q1KS79">
    <property type="expression patterns" value="baseline and differential"/>
</dbReference>
<dbReference type="CDD" id="cd22157">
    <property type="entry name" value="F-box_AtFBW1-like"/>
    <property type="match status" value="1"/>
</dbReference>
<dbReference type="InterPro" id="IPR013187">
    <property type="entry name" value="F-box-assoc_dom_typ3"/>
</dbReference>
<dbReference type="InterPro" id="IPR017451">
    <property type="entry name" value="F-box-assoc_interact_dom"/>
</dbReference>
<dbReference type="InterPro" id="IPR036047">
    <property type="entry name" value="F-box-like_dom_sf"/>
</dbReference>
<dbReference type="InterPro" id="IPR001810">
    <property type="entry name" value="F-box_dom"/>
</dbReference>
<dbReference type="NCBIfam" id="TIGR01640">
    <property type="entry name" value="F_box_assoc_1"/>
    <property type="match status" value="1"/>
</dbReference>
<dbReference type="PANTHER" id="PTHR31111">
    <property type="entry name" value="BNAA05G37150D PROTEIN-RELATED"/>
    <property type="match status" value="1"/>
</dbReference>
<dbReference type="PANTHER" id="PTHR31111:SF130">
    <property type="entry name" value="F-BOX ASSOCIATED UBIQUITINATION EFFECTOR FAMILY PROTEIN"/>
    <property type="match status" value="1"/>
</dbReference>
<dbReference type="Pfam" id="PF00646">
    <property type="entry name" value="F-box"/>
    <property type="match status" value="1"/>
</dbReference>
<dbReference type="Pfam" id="PF08268">
    <property type="entry name" value="FBA_3"/>
    <property type="match status" value="1"/>
</dbReference>
<dbReference type="SMART" id="SM00256">
    <property type="entry name" value="FBOX"/>
    <property type="match status" value="1"/>
</dbReference>
<dbReference type="SUPFAM" id="SSF81383">
    <property type="entry name" value="F-box domain"/>
    <property type="match status" value="1"/>
</dbReference>
<accession>Q1KS79</accession>
<accession>O22191</accession>
<sequence length="307" mass="35916">MNSSSPISIDLIAEILSRVPSKSVARFRCVSKPWASMIRRPYFTELFLTRSSPKPCILFATVADGVWSFFSLPQYPYEKSSSASVAASAKFHVKFPPNNMRIGHNSDRRYFSYGYTSGLIYLYGDSSDDRSVICNPYTGEYAILPYLQRYRKTYSFLVFEPIEKQFKILFMAYLSGDRDHKILTVGTGNMKWRTIRCSLRYEIVSEGVSINGVLYYLGETSAWDNKDYDLKYDYAIVCFDIRSEKFIFFEIERFCRLINYKGKLAVIYFEDDVNYQSCLYRKKNYVEPDAINKLNVWVLEDVEKQEW</sequence>
<comment type="sequence caution" evidence="1">
    <conflict type="erroneous gene model prediction">
        <sequence resource="EMBL-CDS" id="AAB87115"/>
    </conflict>
</comment>
<feature type="chain" id="PRO_0000283387" description="F-box protein At2g23160">
    <location>
        <begin position="1"/>
        <end position="307"/>
    </location>
</feature>
<feature type="domain" description="F-box">
    <location>
        <begin position="2"/>
        <end position="49"/>
    </location>
</feature>